<proteinExistence type="inferred from homology"/>
<accession>Q30Z51</accession>
<comment type="function">
    <text evidence="1">One of the primary rRNA binding proteins, it binds specifically to the 5'-end of 16S ribosomal RNA.</text>
</comment>
<comment type="subunit">
    <text evidence="1">Part of the 30S ribosomal subunit.</text>
</comment>
<comment type="similarity">
    <text evidence="1">Belongs to the universal ribosomal protein uS17 family.</text>
</comment>
<dbReference type="EMBL" id="CP000112">
    <property type="protein sequence ID" value="ABB39045.1"/>
    <property type="molecule type" value="Genomic_DNA"/>
</dbReference>
<dbReference type="RefSeq" id="WP_011368136.1">
    <property type="nucleotide sequence ID" value="NC_007519.1"/>
</dbReference>
<dbReference type="SMR" id="Q30Z51"/>
<dbReference type="STRING" id="207559.Dde_2248"/>
<dbReference type="KEGG" id="dde:Dde_2248"/>
<dbReference type="eggNOG" id="COG0186">
    <property type="taxonomic scope" value="Bacteria"/>
</dbReference>
<dbReference type="HOGENOM" id="CLU_073626_1_1_7"/>
<dbReference type="Proteomes" id="UP000002710">
    <property type="component" value="Chromosome"/>
</dbReference>
<dbReference type="GO" id="GO:0022627">
    <property type="term" value="C:cytosolic small ribosomal subunit"/>
    <property type="evidence" value="ECO:0007669"/>
    <property type="project" value="TreeGrafter"/>
</dbReference>
<dbReference type="GO" id="GO:0019843">
    <property type="term" value="F:rRNA binding"/>
    <property type="evidence" value="ECO:0007669"/>
    <property type="project" value="UniProtKB-UniRule"/>
</dbReference>
<dbReference type="GO" id="GO:0003735">
    <property type="term" value="F:structural constituent of ribosome"/>
    <property type="evidence" value="ECO:0007669"/>
    <property type="project" value="InterPro"/>
</dbReference>
<dbReference type="GO" id="GO:0006412">
    <property type="term" value="P:translation"/>
    <property type="evidence" value="ECO:0007669"/>
    <property type="project" value="UniProtKB-UniRule"/>
</dbReference>
<dbReference type="CDD" id="cd00364">
    <property type="entry name" value="Ribosomal_uS17"/>
    <property type="match status" value="1"/>
</dbReference>
<dbReference type="Gene3D" id="2.40.50.140">
    <property type="entry name" value="Nucleic acid-binding proteins"/>
    <property type="match status" value="1"/>
</dbReference>
<dbReference type="HAMAP" id="MF_01345_B">
    <property type="entry name" value="Ribosomal_uS17_B"/>
    <property type="match status" value="1"/>
</dbReference>
<dbReference type="InterPro" id="IPR012340">
    <property type="entry name" value="NA-bd_OB-fold"/>
</dbReference>
<dbReference type="InterPro" id="IPR000266">
    <property type="entry name" value="Ribosomal_uS17"/>
</dbReference>
<dbReference type="InterPro" id="IPR019984">
    <property type="entry name" value="Ribosomal_uS17_bact/chlr"/>
</dbReference>
<dbReference type="InterPro" id="IPR019979">
    <property type="entry name" value="Ribosomal_uS17_CS"/>
</dbReference>
<dbReference type="NCBIfam" id="NF004123">
    <property type="entry name" value="PRK05610.1"/>
    <property type="match status" value="1"/>
</dbReference>
<dbReference type="NCBIfam" id="TIGR03635">
    <property type="entry name" value="uS17_bact"/>
    <property type="match status" value="1"/>
</dbReference>
<dbReference type="PANTHER" id="PTHR10744">
    <property type="entry name" value="40S RIBOSOMAL PROTEIN S11 FAMILY MEMBER"/>
    <property type="match status" value="1"/>
</dbReference>
<dbReference type="PANTHER" id="PTHR10744:SF1">
    <property type="entry name" value="SMALL RIBOSOMAL SUBUNIT PROTEIN US17M"/>
    <property type="match status" value="1"/>
</dbReference>
<dbReference type="Pfam" id="PF00366">
    <property type="entry name" value="Ribosomal_S17"/>
    <property type="match status" value="1"/>
</dbReference>
<dbReference type="PRINTS" id="PR00973">
    <property type="entry name" value="RIBOSOMALS17"/>
</dbReference>
<dbReference type="SUPFAM" id="SSF50249">
    <property type="entry name" value="Nucleic acid-binding proteins"/>
    <property type="match status" value="1"/>
</dbReference>
<dbReference type="PROSITE" id="PS00056">
    <property type="entry name" value="RIBOSOMAL_S17"/>
    <property type="match status" value="1"/>
</dbReference>
<name>RS17_OLEA2</name>
<feature type="chain" id="PRO_0000233473" description="Small ribosomal subunit protein uS17">
    <location>
        <begin position="1"/>
        <end position="88"/>
    </location>
</feature>
<organism>
    <name type="scientific">Oleidesulfovibrio alaskensis (strain ATCC BAA-1058 / DSM 17464 / G20)</name>
    <name type="common">Desulfovibrio alaskensis</name>
    <dbReference type="NCBI Taxonomy" id="207559"/>
    <lineage>
        <taxon>Bacteria</taxon>
        <taxon>Pseudomonadati</taxon>
        <taxon>Thermodesulfobacteriota</taxon>
        <taxon>Desulfovibrionia</taxon>
        <taxon>Desulfovibrionales</taxon>
        <taxon>Desulfovibrionaceae</taxon>
        <taxon>Oleidesulfovibrio</taxon>
    </lineage>
</organism>
<gene>
    <name evidence="1" type="primary">rpsQ</name>
    <name type="ordered locus">Dde_2248</name>
</gene>
<reference key="1">
    <citation type="journal article" date="2011" name="J. Bacteriol.">
        <title>Complete genome sequence and updated annotation of Desulfovibrio alaskensis G20.</title>
        <authorList>
            <person name="Hauser L.J."/>
            <person name="Land M.L."/>
            <person name="Brown S.D."/>
            <person name="Larimer F."/>
            <person name="Keller K.L."/>
            <person name="Rapp-Giles B.J."/>
            <person name="Price M.N."/>
            <person name="Lin M."/>
            <person name="Bruce D.C."/>
            <person name="Detter J.C."/>
            <person name="Tapia R."/>
            <person name="Han C.S."/>
            <person name="Goodwin L.A."/>
            <person name="Cheng J.F."/>
            <person name="Pitluck S."/>
            <person name="Copeland A."/>
            <person name="Lucas S."/>
            <person name="Nolan M."/>
            <person name="Lapidus A.L."/>
            <person name="Palumbo A.V."/>
            <person name="Wall J.D."/>
        </authorList>
    </citation>
    <scope>NUCLEOTIDE SEQUENCE [LARGE SCALE GENOMIC DNA]</scope>
    <source>
        <strain>ATCC BAA-1058 / DSM 17464 / G20</strain>
    </source>
</reference>
<protein>
    <recommendedName>
        <fullName evidence="1">Small ribosomal subunit protein uS17</fullName>
    </recommendedName>
    <alternativeName>
        <fullName evidence="2">30S ribosomal protein S17</fullName>
    </alternativeName>
</protein>
<sequence>MSEAIENRNGRALVGVVVSDKNDKTIVVRVETLVKHPLLKKYIRRRKKFTAHDPNNECKVGDKVKIIEFRPVSRNKRWHLVSILEKAV</sequence>
<evidence type="ECO:0000255" key="1">
    <source>
        <dbReference type="HAMAP-Rule" id="MF_01345"/>
    </source>
</evidence>
<evidence type="ECO:0000305" key="2"/>
<keyword id="KW-1185">Reference proteome</keyword>
<keyword id="KW-0687">Ribonucleoprotein</keyword>
<keyword id="KW-0689">Ribosomal protein</keyword>
<keyword id="KW-0694">RNA-binding</keyword>
<keyword id="KW-0699">rRNA-binding</keyword>